<protein>
    <recommendedName>
        <fullName>Uveal autoantigen with coiled-coil domains and ankyrin repeats protein</fullName>
    </recommendedName>
    <alternativeName>
        <fullName>Beta-actin-binding protein</fullName>
    </alternativeName>
    <alternativeName>
        <fullName>BetaCAP73</fullName>
    </alternativeName>
</protein>
<name>UACA_BOVIN</name>
<reference key="1">
    <citation type="journal article" date="2002" name="Int. J. Biochem. Cell Biol.">
        <title>Cloning and characterization of betaCAP73, a novel regulator of beta-actin assembly.</title>
        <authorList>
            <person name="Welch A.Y."/>
            <person name="Herman I.M."/>
        </authorList>
    </citation>
    <scope>NUCLEOTIDE SEQUENCE [MRNA]</scope>
    <scope>FUNCTION</scope>
    <scope>TISSUE SPECIFICITY</scope>
    <scope>INDUCTION</scope>
</reference>
<reference key="2">
    <citation type="journal article" date="2003" name="Mol. Biol. Cell">
        <title>Betacap73-ARF6 interactions modulate cell shape and motility after injury in vitro.</title>
        <authorList>
            <person name="Riley K.N."/>
            <person name="Maldonado A.E."/>
            <person name="Tellier P."/>
            <person name="D'Souza-Schorey C."/>
            <person name="Herman I.M."/>
        </authorList>
    </citation>
    <scope>INTERACTION WITH ARF6 AND ACTB</scope>
    <scope>FUNCTION</scope>
</reference>
<proteinExistence type="evidence at protein level"/>
<sequence>MMSCWFSCAPKNRQAADWNKYDDRLMRAAERGDVEKVSSILAKKGVNPGKLDVEGRSAFHVVASKGNLECLNAILIHGVDITTSDTAGRNALHLAAKYGHALCLQKLLQYNCPTEHVDLQGRTALHDAAMADCPSSIQLLCDHGASVNAKDVDGRTPLVLATQMCRPTICQLLIDRGADINSRDKQNRTALMLGCEYGCKDAVEVLIKNGADVTLLDALGHDSSYYARIGDNLDILTLLKTASENSNKGRELWKKGPSLQQRNLSQMLDEVNTKSNQREHQNIQDLEIENEDLKERLRKIQQEQRILLDKVNGLQLQLNEEVMVADDLESEKEKLKSLLAAKEKQHEESLRTIEALKSRFKYFESDHLGSGSHFRKEDMLLKQGQMYMTDSQCTSTGMPVHMQSRSMLRPLELALPNQASYSENEILKKELEAMRTFCDSAKQDRLKLQNELAHKVAECKALALECERVKEDSDEQIKQLEDALKDVQKRMYESEGKVKQMQTHFLALKEHLTSDAATGNHRLMEELKDQLKDMKVKYEGASAEVGKLRNQIKQNEMLVEEFKRDEGKLMEENKRLQKELSMCELEREKRGRKLTEMEGQLKDLSAKLALSIPAEKFENMKSLLSNELNEKAKKLIDVEREYERSLNETRPLKRELENLKAKLAQHVKPEEHEQLKSRLEQKSGELGKRITELTSKNQTLQKEIEKVCLDNKLLTQQVNNLTTEMKNHYVPLKVSEEMKKSHDVIVDDLNKKLSDVTHKYTEKKLEMEKLLMENASLSKNVSRLETVFIPPERHEKEMMALKSNITELKKQLSELNKKCGEDQEKIYSLMSENNDLKKTMSHQYVPVKTHEEIKTALSSTLDKTNRELVDVKKKCEDINQEFVKIKDENEILKRNLENTQNQVKAEYISLREHEEKMSGLRKSMKKVQDNSAEILAKYKKSQEEIVTLHEEIAAQKRELDTIQECIKLKYAPIISLEECERKFKATEKELKEQLSQQTQKYNTSEEEAKKCKQENDKLKKEILTLQKDLKDKNVHIENSYETERALSRKTEELNRQLKDLLQKYTEAKKEKEKLVEENAKQTSEILAAQTLLQKQHVPLEQVESLKKSLSGTIETLKEELKTKQRCYEKEQQTVTQLRQMLENQKNSSVPLAEHLQVKEAFEKEVGIIKASLREKEEESQNKTEEVSKLQSEIQNTKQALKKLETREVVDLSKYKATKSDLETQISDLNEKLANLNRKYEEVCEEVLHAKKKELSAKDEKELLHFSIEQEIKDQQERCDKSLTTITELQRRIQESAKQIEAKDNKITELLNDVERLKQALNGLSQLTYGSGSPSKRQSQLIDSLQQQVRSLQQQLADADRQHQEVIAIYRTHLLSAAQGHMDEDVQAALLQIIQMRQGLVC</sequence>
<comment type="function">
    <text evidence="1">Regulates APAF1 expression and plays an important role in the regulation of stress-induced apoptosis. Promotes apoptosis by regulating three pathways, apoptosome up-regulation, LGALS3/galectin-3 down-regulation and NF-kappa-B inactivation. Regulates the redistribution of APAF1 into the nucleus after proapoptotic stress. Down-regulates the expression of LGALS3 by inhibiting NFKB1 (By similarity).</text>
</comment>
<comment type="function">
    <text evidence="2 5 6">Modulates isoactin dynamics to regulate the morphological alterations required for cell growth and motility. Interaction with ARF6 may modulate cell shape and motility after injury (PubMed:11950601, PubMed:14517325). May be involved in multiple neurite formation (By similarity).</text>
</comment>
<comment type="subunit">
    <text evidence="2 6">Component of the apoptosome complex, composed of APAF1, pro-caspase-9 and UACA. In the complex, it probably interacts directly with APAF1. Interacts with LGALS3 (By similarity). Interacts with ARF6 and ACTB. Interacts with RAB39A (By similarity).</text>
</comment>
<comment type="subcellular location">
    <subcellularLocation>
        <location evidence="1">Nucleus</location>
    </subcellularLocation>
    <subcellularLocation>
        <location evidence="1">Cytoplasm</location>
    </subcellularLocation>
    <subcellularLocation>
        <location evidence="1">Cytoplasm</location>
        <location evidence="1">Cytoskeleton</location>
    </subcellularLocation>
    <text evidence="1">Expressed diffusely in cytoplasm.</text>
</comment>
<comment type="tissue specificity">
    <text evidence="5">Highly expressed in muscle and heart, moderately in liver, kidney and pancreas, and weakly in placenta and lung.</text>
</comment>
<comment type="induction">
    <text evidence="5">Down-regulated in crawling cells. Up-regulated in motility-defective cells.</text>
</comment>
<gene>
    <name type="primary">UACA</name>
</gene>
<evidence type="ECO:0000250" key="1"/>
<evidence type="ECO:0000250" key="2">
    <source>
        <dbReference type="UniProtKB" id="Q8CGB3"/>
    </source>
</evidence>
<evidence type="ECO:0000250" key="3">
    <source>
        <dbReference type="UniProtKB" id="Q9BZF9"/>
    </source>
</evidence>
<evidence type="ECO:0000255" key="4"/>
<evidence type="ECO:0000269" key="5">
    <source>
    </source>
</evidence>
<evidence type="ECO:0000269" key="6">
    <source>
    </source>
</evidence>
<organism>
    <name type="scientific">Bos taurus</name>
    <name type="common">Bovine</name>
    <dbReference type="NCBI Taxonomy" id="9913"/>
    <lineage>
        <taxon>Eukaryota</taxon>
        <taxon>Metazoa</taxon>
        <taxon>Chordata</taxon>
        <taxon>Craniata</taxon>
        <taxon>Vertebrata</taxon>
        <taxon>Euteleostomi</taxon>
        <taxon>Mammalia</taxon>
        <taxon>Eutheria</taxon>
        <taxon>Laurasiatheria</taxon>
        <taxon>Artiodactyla</taxon>
        <taxon>Ruminantia</taxon>
        <taxon>Pecora</taxon>
        <taxon>Bovidae</taxon>
        <taxon>Bovinae</taxon>
        <taxon>Bos</taxon>
    </lineage>
</organism>
<feature type="chain" id="PRO_0000231648" description="Uveal autoantigen with coiled-coil domains and ankyrin repeats protein">
    <location>
        <begin position="1"/>
        <end position="1401"/>
    </location>
</feature>
<feature type="repeat" description="ANK 1">
    <location>
        <begin position="25"/>
        <end position="53"/>
    </location>
</feature>
<feature type="repeat" description="ANK 2">
    <location>
        <begin position="54"/>
        <end position="83"/>
    </location>
</feature>
<feature type="repeat" description="ANK 3">
    <location>
        <begin position="87"/>
        <end position="116"/>
    </location>
</feature>
<feature type="repeat" description="ANK 4">
    <location>
        <begin position="120"/>
        <end position="149"/>
    </location>
</feature>
<feature type="repeat" description="ANK 5">
    <location>
        <begin position="153"/>
        <end position="182"/>
    </location>
</feature>
<feature type="repeat" description="ANK 6">
    <location>
        <begin position="186"/>
        <end position="215"/>
    </location>
</feature>
<feature type="coiled-coil region" evidence="4">
    <location>
        <begin position="273"/>
        <end position="361"/>
    </location>
</feature>
<feature type="coiled-coil region" evidence="4">
    <location>
        <begin position="423"/>
        <end position="827"/>
    </location>
</feature>
<feature type="coiled-coil region" evidence="4">
    <location>
        <begin position="856"/>
        <end position="1368"/>
    </location>
</feature>
<feature type="modified residue" description="Phosphoserine" evidence="2">
    <location>
        <position position="265"/>
    </location>
</feature>
<feature type="cross-link" description="Glycyl lysine isopeptide (Lys-Gly) (interchain with G-Cter in SUMO2)" evidence="3">
    <location>
        <position position="1020"/>
    </location>
</feature>
<accession>Q8HYY4</accession>
<keyword id="KW-0040">ANK repeat</keyword>
<keyword id="KW-0175">Coiled coil</keyword>
<keyword id="KW-0963">Cytoplasm</keyword>
<keyword id="KW-0206">Cytoskeleton</keyword>
<keyword id="KW-1017">Isopeptide bond</keyword>
<keyword id="KW-0539">Nucleus</keyword>
<keyword id="KW-0597">Phosphoprotein</keyword>
<keyword id="KW-1185">Reference proteome</keyword>
<keyword id="KW-0677">Repeat</keyword>
<keyword id="KW-0832">Ubl conjugation</keyword>
<dbReference type="EMBL" id="AY152693">
    <property type="protein sequence ID" value="AAN74017.1"/>
    <property type="molecule type" value="mRNA"/>
</dbReference>
<dbReference type="RefSeq" id="NP_776634.1">
    <property type="nucleotide sequence ID" value="NM_174209.2"/>
</dbReference>
<dbReference type="SMR" id="Q8HYY4"/>
<dbReference type="FunCoup" id="Q8HYY4">
    <property type="interactions" value="115"/>
</dbReference>
<dbReference type="STRING" id="9913.ENSBTAP00000063980"/>
<dbReference type="iPTMnet" id="Q8HYY4"/>
<dbReference type="PaxDb" id="9913-ENSBTAP00000018584"/>
<dbReference type="GeneID" id="281559"/>
<dbReference type="KEGG" id="bta:281559"/>
<dbReference type="CTD" id="55075"/>
<dbReference type="eggNOG" id="ENOG502QPYN">
    <property type="taxonomic scope" value="Eukaryota"/>
</dbReference>
<dbReference type="InParanoid" id="Q8HYY4"/>
<dbReference type="OrthoDB" id="341259at2759"/>
<dbReference type="Proteomes" id="UP000009136">
    <property type="component" value="Unplaced"/>
</dbReference>
<dbReference type="GO" id="GO:0005856">
    <property type="term" value="C:cytoskeleton"/>
    <property type="evidence" value="ECO:0007669"/>
    <property type="project" value="UniProtKB-SubCell"/>
</dbReference>
<dbReference type="GO" id="GO:0005829">
    <property type="term" value="C:cytosol"/>
    <property type="evidence" value="ECO:0000318"/>
    <property type="project" value="GO_Central"/>
</dbReference>
<dbReference type="GO" id="GO:0005634">
    <property type="term" value="C:nucleus"/>
    <property type="evidence" value="ECO:0000318"/>
    <property type="project" value="GO_Central"/>
</dbReference>
<dbReference type="GO" id="GO:0003779">
    <property type="term" value="F:actin binding"/>
    <property type="evidence" value="ECO:0007669"/>
    <property type="project" value="InterPro"/>
</dbReference>
<dbReference type="GO" id="GO:0008630">
    <property type="term" value="P:intrinsic apoptotic signaling pathway in response to DNA damage"/>
    <property type="evidence" value="ECO:0000318"/>
    <property type="project" value="GO_Central"/>
</dbReference>
<dbReference type="GO" id="GO:0008631">
    <property type="term" value="P:intrinsic apoptotic signaling pathway in response to oxidative stress"/>
    <property type="evidence" value="ECO:0000318"/>
    <property type="project" value="GO_Central"/>
</dbReference>
<dbReference type="GO" id="GO:0050728">
    <property type="term" value="P:negative regulation of inflammatory response"/>
    <property type="evidence" value="ECO:0000318"/>
    <property type="project" value="GO_Central"/>
</dbReference>
<dbReference type="GO" id="GO:1901223">
    <property type="term" value="P:negative regulation of non-canonical NF-kappaB signal transduction"/>
    <property type="evidence" value="ECO:0000318"/>
    <property type="project" value="GO_Central"/>
</dbReference>
<dbReference type="FunFam" id="1.25.40.20:FF:000083">
    <property type="entry name" value="Uveal autoantigen with coiled-coil domains and ankyrin repeats"/>
    <property type="match status" value="1"/>
</dbReference>
<dbReference type="FunFam" id="1.25.40.20:FF:000287">
    <property type="entry name" value="Uveal autoantigen with coiled-coil domains and ankyrin repeats"/>
    <property type="match status" value="1"/>
</dbReference>
<dbReference type="Gene3D" id="1.25.40.20">
    <property type="entry name" value="Ankyrin repeat-containing domain"/>
    <property type="match status" value="2"/>
</dbReference>
<dbReference type="InterPro" id="IPR002110">
    <property type="entry name" value="Ankyrin_rpt"/>
</dbReference>
<dbReference type="InterPro" id="IPR036770">
    <property type="entry name" value="Ankyrin_rpt-contain_sf"/>
</dbReference>
<dbReference type="InterPro" id="IPR042420">
    <property type="entry name" value="RAI14/UACA"/>
</dbReference>
<dbReference type="PANTHER" id="PTHR24129">
    <property type="entry name" value="ANKYCORBIN"/>
    <property type="match status" value="1"/>
</dbReference>
<dbReference type="PANTHER" id="PTHR24129:SF1">
    <property type="entry name" value="UVEAL AUTOANTIGEN WITH COILED-COIL DOMAINS AND ANKYRIN REPEATS"/>
    <property type="match status" value="1"/>
</dbReference>
<dbReference type="Pfam" id="PF00023">
    <property type="entry name" value="Ank"/>
    <property type="match status" value="1"/>
</dbReference>
<dbReference type="Pfam" id="PF12796">
    <property type="entry name" value="Ank_2"/>
    <property type="match status" value="1"/>
</dbReference>
<dbReference type="Pfam" id="PF13637">
    <property type="entry name" value="Ank_4"/>
    <property type="match status" value="1"/>
</dbReference>
<dbReference type="PRINTS" id="PR01415">
    <property type="entry name" value="ANKYRIN"/>
</dbReference>
<dbReference type="SMART" id="SM00248">
    <property type="entry name" value="ANK"/>
    <property type="match status" value="6"/>
</dbReference>
<dbReference type="SUPFAM" id="SSF48403">
    <property type="entry name" value="Ankyrin repeat"/>
    <property type="match status" value="1"/>
</dbReference>
<dbReference type="SUPFAM" id="SSF90257">
    <property type="entry name" value="Myosin rod fragments"/>
    <property type="match status" value="1"/>
</dbReference>
<dbReference type="PROSITE" id="PS50297">
    <property type="entry name" value="ANK_REP_REGION"/>
    <property type="match status" value="1"/>
</dbReference>
<dbReference type="PROSITE" id="PS50088">
    <property type="entry name" value="ANK_REPEAT"/>
    <property type="match status" value="5"/>
</dbReference>